<comment type="function">
    <text evidence="6">Acts as an E3 ubiquitin-protein ligase, which accepts ubiquitin from specific E2 ubiquitin-conjugating enzymes, and then transfers it to substrates promoting their degradation by the proteasome. Functionally coupled with the E2 ubiquitin-protein ligases UB2D1, UB2D2 and UB2D3. Regulator of EGFR mediated signal transduction; upon EGF activation, ubiquitinates EGFR. Inhibits EGF stimulated MAPK1 activation. Promotes ubiquitination of SRC phosphorylated at 'Tyr-419', has the highest ubiquitin ligase activity among CBL family proteins. In collaboration with CD2AP may act as regulatory checkpoint for Ret signaling by modulating the rate of RET degradation after ligand activation; CD2AP converts it from an inhibitor to a promoter of RET degradation; the function limits the potency of GDNF on neuronal survival.</text>
</comment>
<comment type="catalytic activity">
    <reaction evidence="3">
        <text>S-ubiquitinyl-[E2 ubiquitin-conjugating enzyme]-L-cysteine + [acceptor protein]-L-lysine = [E2 ubiquitin-conjugating enzyme]-L-cysteine + N(6)-ubiquitinyl-[acceptor protein]-L-lysine.</text>
        <dbReference type="EC" id="2.3.2.27"/>
    </reaction>
</comment>
<comment type="activity regulation">
    <text evidence="3">Phosphorylation at Tyr-341 is necessary and sufficient for the activation of E3 activity.</text>
</comment>
<comment type="subunit">
    <text evidence="6">Interacts with Ubiquitin-conjugating enzyme E2 UBE2D2 and UBE2D3. Interacts with EGFR (tyrosine phosphorylated). Interacts with the SH3 domain proteins LYN and CRK. Interacts (via RING-type zinc finger) with TGFB1I1 (via LIM zinc-binding domain 2); the interaction is direct and enhances the E3 activity. Interacts directly with RET (inactive) and CD2AP; dissociates from RET upon RET activation by GDNF which also increases the interaction with CD2AP suggesting dissociation as CBLC:CD2AP complex. Interacts with SRC; the interaction is enhanced when SRC is phosphorylated at 'Tyr-419'.</text>
</comment>
<comment type="domain">
    <text evidence="3">EF-hand-like and Sh2-like domains are required for N-terminal inhibition of E3 activity.</text>
</comment>
<comment type="domain">
    <text evidence="5">The N-terminus is composed of the phosphotyrosine binding (PTB) domain, a short linker region and the RING-type zinc finger. The PTB domain, which is also called TKB (tyrosine kinase binding) domain, is composed of three different subdomains: a four-helix bundle (4H), a calcium-binding EF hand and a divergent SH2 domain.</text>
</comment>
<comment type="domain">
    <text evidence="1">The RING-type zinc finger domain mediates binding to an E2 ubiquitin-conjugating enzyme.</text>
</comment>
<comment type="PTM">
    <text evidence="1">Phosphorylated on multiple tyrosine residues by SRC.</text>
</comment>
<comment type="PTM">
    <text>Autoubiquitinated, when phosphorylated at Tyr-341.</text>
</comment>
<comment type="miscellaneous">
    <text evidence="1">This protein has one functional calcium-binding site.</text>
</comment>
<dbReference type="EC" id="2.3.2.27" evidence="3"/>
<dbReference type="EMBL" id="AABR06003893">
    <property type="status" value="NOT_ANNOTATED_CDS"/>
    <property type="molecule type" value="Genomic_DNA"/>
</dbReference>
<dbReference type="EMBL" id="CH473979">
    <property type="protein sequence ID" value="EDM08131.1"/>
    <property type="molecule type" value="Genomic_DNA"/>
</dbReference>
<dbReference type="EMBL" id="BC105776">
    <property type="protein sequence ID" value="AAI05777.1"/>
    <property type="molecule type" value="mRNA"/>
</dbReference>
<dbReference type="RefSeq" id="NP_001030092.1">
    <property type="nucleotide sequence ID" value="NM_001034920.2"/>
</dbReference>
<dbReference type="SMR" id="G3V8H4"/>
<dbReference type="FunCoup" id="G3V8H4">
    <property type="interactions" value="333"/>
</dbReference>
<dbReference type="STRING" id="10116.ENSRNOP00000070090"/>
<dbReference type="PhosphoSitePlus" id="G3V8H4"/>
<dbReference type="PaxDb" id="10116-ENSRNOP00000025829"/>
<dbReference type="Ensembl" id="ENSRNOT00000025829.8">
    <property type="protein sequence ID" value="ENSRNOP00000025829.4"/>
    <property type="gene ID" value="ENSRNOG00000018953.8"/>
</dbReference>
<dbReference type="GeneID" id="292699"/>
<dbReference type="KEGG" id="rno:292699"/>
<dbReference type="UCSC" id="RGD:1307651">
    <property type="organism name" value="rat"/>
</dbReference>
<dbReference type="AGR" id="RGD:1307651"/>
<dbReference type="CTD" id="23624"/>
<dbReference type="RGD" id="1307651">
    <property type="gene designation" value="Cblc"/>
</dbReference>
<dbReference type="eggNOG" id="KOG1785">
    <property type="taxonomic scope" value="Eukaryota"/>
</dbReference>
<dbReference type="GeneTree" id="ENSGT00940000162336"/>
<dbReference type="HOGENOM" id="CLU_013535_2_0_1"/>
<dbReference type="InParanoid" id="G3V8H4"/>
<dbReference type="OMA" id="NIRLEPC"/>
<dbReference type="OrthoDB" id="7237699at2759"/>
<dbReference type="TreeFam" id="TF314210"/>
<dbReference type="PRO" id="PR:G3V8H4"/>
<dbReference type="Proteomes" id="UP000002494">
    <property type="component" value="Chromosome 1"/>
</dbReference>
<dbReference type="Proteomes" id="UP000234681">
    <property type="component" value="Chromosome 1"/>
</dbReference>
<dbReference type="Bgee" id="ENSRNOG00000018953">
    <property type="expression patterns" value="Expressed in jejunum and 15 other cell types or tissues"/>
</dbReference>
<dbReference type="GO" id="GO:0045121">
    <property type="term" value="C:membrane raft"/>
    <property type="evidence" value="ECO:0000318"/>
    <property type="project" value="GO_Central"/>
</dbReference>
<dbReference type="GO" id="GO:0005886">
    <property type="term" value="C:plasma membrane"/>
    <property type="evidence" value="ECO:0000318"/>
    <property type="project" value="GO_Central"/>
</dbReference>
<dbReference type="GO" id="GO:0005509">
    <property type="term" value="F:calcium ion binding"/>
    <property type="evidence" value="ECO:0007669"/>
    <property type="project" value="InterPro"/>
</dbReference>
<dbReference type="GO" id="GO:0005154">
    <property type="term" value="F:epidermal growth factor receptor binding"/>
    <property type="evidence" value="ECO:0000266"/>
    <property type="project" value="RGD"/>
</dbReference>
<dbReference type="GO" id="GO:0001784">
    <property type="term" value="F:phosphotyrosine residue binding"/>
    <property type="evidence" value="ECO:0000266"/>
    <property type="project" value="RGD"/>
</dbReference>
<dbReference type="GO" id="GO:0030971">
    <property type="term" value="F:receptor tyrosine kinase binding"/>
    <property type="evidence" value="ECO:0000318"/>
    <property type="project" value="GO_Central"/>
</dbReference>
<dbReference type="GO" id="GO:0017124">
    <property type="term" value="F:SH3 domain binding"/>
    <property type="evidence" value="ECO:0000266"/>
    <property type="project" value="RGD"/>
</dbReference>
<dbReference type="GO" id="GO:0061630">
    <property type="term" value="F:ubiquitin protein ligase activity"/>
    <property type="evidence" value="ECO:0000266"/>
    <property type="project" value="RGD"/>
</dbReference>
<dbReference type="GO" id="GO:0008270">
    <property type="term" value="F:zinc ion binding"/>
    <property type="evidence" value="ECO:0007669"/>
    <property type="project" value="UniProtKB-KW"/>
</dbReference>
<dbReference type="GO" id="GO:0007166">
    <property type="term" value="P:cell surface receptor signaling pathway"/>
    <property type="evidence" value="ECO:0007669"/>
    <property type="project" value="InterPro"/>
</dbReference>
<dbReference type="GO" id="GO:0042059">
    <property type="term" value="P:negative regulation of epidermal growth factor receptor signaling pathway"/>
    <property type="evidence" value="ECO:0000266"/>
    <property type="project" value="RGD"/>
</dbReference>
<dbReference type="GO" id="GO:0043409">
    <property type="term" value="P:negative regulation of MAPK cascade"/>
    <property type="evidence" value="ECO:0000266"/>
    <property type="project" value="RGD"/>
</dbReference>
<dbReference type="GO" id="GO:0043524">
    <property type="term" value="P:negative regulation of neuron apoptotic process"/>
    <property type="evidence" value="ECO:0000266"/>
    <property type="project" value="RGD"/>
</dbReference>
<dbReference type="GO" id="GO:0030163">
    <property type="term" value="P:protein catabolic process"/>
    <property type="evidence" value="ECO:0000266"/>
    <property type="project" value="RGD"/>
</dbReference>
<dbReference type="GO" id="GO:0050821">
    <property type="term" value="P:protein stabilization"/>
    <property type="evidence" value="ECO:0000266"/>
    <property type="project" value="RGD"/>
</dbReference>
<dbReference type="GO" id="GO:0016567">
    <property type="term" value="P:protein ubiquitination"/>
    <property type="evidence" value="ECO:0000266"/>
    <property type="project" value="RGD"/>
</dbReference>
<dbReference type="GO" id="GO:1990790">
    <property type="term" value="P:response to glial cell derived neurotrophic factor"/>
    <property type="evidence" value="ECO:0000266"/>
    <property type="project" value="RGD"/>
</dbReference>
<dbReference type="GO" id="GO:0007165">
    <property type="term" value="P:signal transduction"/>
    <property type="evidence" value="ECO:0000318"/>
    <property type="project" value="GO_Central"/>
</dbReference>
<dbReference type="GO" id="GO:0006511">
    <property type="term" value="P:ubiquitin-dependent protein catabolic process"/>
    <property type="evidence" value="ECO:0000266"/>
    <property type="project" value="RGD"/>
</dbReference>
<dbReference type="CDD" id="cd16710">
    <property type="entry name" value="RING-HC_Cbl-c"/>
    <property type="match status" value="1"/>
</dbReference>
<dbReference type="CDD" id="cd09920">
    <property type="entry name" value="SH2_Cbl-b_TKB"/>
    <property type="match status" value="1"/>
</dbReference>
<dbReference type="FunFam" id="3.30.505.10:FF:000007">
    <property type="entry name" value="E3 ubiquitin-protein ligase CBL"/>
    <property type="match status" value="1"/>
</dbReference>
<dbReference type="FunFam" id="1.10.238.10:FF:000182">
    <property type="entry name" value="E3 ubiquitin-protein ligase CBL-C"/>
    <property type="match status" value="1"/>
</dbReference>
<dbReference type="Gene3D" id="1.20.930.20">
    <property type="entry name" value="Adaptor protein Cbl, N-terminal domain"/>
    <property type="match status" value="1"/>
</dbReference>
<dbReference type="Gene3D" id="1.10.238.10">
    <property type="entry name" value="EF-hand"/>
    <property type="match status" value="1"/>
</dbReference>
<dbReference type="Gene3D" id="3.30.505.10">
    <property type="entry name" value="SH2 domain"/>
    <property type="match status" value="1"/>
</dbReference>
<dbReference type="Gene3D" id="3.30.40.10">
    <property type="entry name" value="Zinc/RING finger domain, C3HC4 (zinc finger)"/>
    <property type="match status" value="1"/>
</dbReference>
<dbReference type="InterPro" id="IPR024162">
    <property type="entry name" value="Adaptor_Cbl"/>
</dbReference>
<dbReference type="InterPro" id="IPR014741">
    <property type="entry name" value="Adaptor_Cbl_EF_hand-like"/>
</dbReference>
<dbReference type="InterPro" id="IPR036537">
    <property type="entry name" value="Adaptor_Cbl_N_dom_sf"/>
</dbReference>
<dbReference type="InterPro" id="IPR003153">
    <property type="entry name" value="Adaptor_Cbl_N_hlx"/>
</dbReference>
<dbReference type="InterPro" id="IPR014742">
    <property type="entry name" value="Adaptor_Cbl_SH2-like"/>
</dbReference>
<dbReference type="InterPro" id="IPR024159">
    <property type="entry name" value="Cbl_PTB"/>
</dbReference>
<dbReference type="InterPro" id="IPR011992">
    <property type="entry name" value="EF-hand-dom_pair"/>
</dbReference>
<dbReference type="InterPro" id="IPR036860">
    <property type="entry name" value="SH2_dom_sf"/>
</dbReference>
<dbReference type="InterPro" id="IPR001841">
    <property type="entry name" value="Znf_RING"/>
</dbReference>
<dbReference type="InterPro" id="IPR013083">
    <property type="entry name" value="Znf_RING/FYVE/PHD"/>
</dbReference>
<dbReference type="InterPro" id="IPR017907">
    <property type="entry name" value="Znf_RING_CS"/>
</dbReference>
<dbReference type="PANTHER" id="PTHR23007">
    <property type="entry name" value="CBL"/>
    <property type="match status" value="1"/>
</dbReference>
<dbReference type="PANTHER" id="PTHR23007:SF12">
    <property type="entry name" value="E3 UBIQUITIN-PROTEIN LIGASE CBL-C"/>
    <property type="match status" value="1"/>
</dbReference>
<dbReference type="Pfam" id="PF02262">
    <property type="entry name" value="Cbl_N"/>
    <property type="match status" value="1"/>
</dbReference>
<dbReference type="Pfam" id="PF02761">
    <property type="entry name" value="Cbl_N2"/>
    <property type="match status" value="1"/>
</dbReference>
<dbReference type="Pfam" id="PF02762">
    <property type="entry name" value="Cbl_N3"/>
    <property type="match status" value="1"/>
</dbReference>
<dbReference type="Pfam" id="PF13920">
    <property type="entry name" value="zf-C3HC4_3"/>
    <property type="match status" value="1"/>
</dbReference>
<dbReference type="SMART" id="SM00184">
    <property type="entry name" value="RING"/>
    <property type="match status" value="1"/>
</dbReference>
<dbReference type="SUPFAM" id="SSF47473">
    <property type="entry name" value="EF-hand"/>
    <property type="match status" value="1"/>
</dbReference>
<dbReference type="SUPFAM" id="SSF47668">
    <property type="entry name" value="N-terminal domain of cbl (N-cbl)"/>
    <property type="match status" value="1"/>
</dbReference>
<dbReference type="SUPFAM" id="SSF57850">
    <property type="entry name" value="RING/U-box"/>
    <property type="match status" value="1"/>
</dbReference>
<dbReference type="SUPFAM" id="SSF55550">
    <property type="entry name" value="SH2 domain"/>
    <property type="match status" value="1"/>
</dbReference>
<dbReference type="PROSITE" id="PS51506">
    <property type="entry name" value="CBL_PTB"/>
    <property type="match status" value="1"/>
</dbReference>
<dbReference type="PROSITE" id="PS00518">
    <property type="entry name" value="ZF_RING_1"/>
    <property type="match status" value="1"/>
</dbReference>
<dbReference type="PROSITE" id="PS50089">
    <property type="entry name" value="ZF_RING_2"/>
    <property type="match status" value="1"/>
</dbReference>
<evidence type="ECO:0000250" key="1"/>
<evidence type="ECO:0000250" key="2">
    <source>
        <dbReference type="UniProtKB" id="P22681"/>
    </source>
</evidence>
<evidence type="ECO:0000250" key="3">
    <source>
        <dbReference type="UniProtKB" id="Q9ULV8"/>
    </source>
</evidence>
<evidence type="ECO:0000255" key="4">
    <source>
        <dbReference type="PROSITE-ProRule" id="PRU00175"/>
    </source>
</evidence>
<evidence type="ECO:0000255" key="5">
    <source>
        <dbReference type="PROSITE-ProRule" id="PRU00839"/>
    </source>
</evidence>
<evidence type="ECO:0000269" key="6">
    <source>
    </source>
</evidence>
<evidence type="ECO:0000305" key="7"/>
<accession>G3V8H4</accession>
<accession>Q3KRC9</accession>
<gene>
    <name type="primary">Cblc</name>
    <name type="synonym">Cbl-3</name>
</gene>
<feature type="chain" id="PRO_0000424873" description="E3 ubiquitin-protein ligase CBL-C">
    <location>
        <begin position="1"/>
        <end position="497"/>
    </location>
</feature>
<feature type="domain" description="Cbl-PTB" evidence="5">
    <location>
        <begin position="7"/>
        <end position="321"/>
    </location>
</feature>
<feature type="zinc finger region" description="RING-type" evidence="4">
    <location>
        <begin position="351"/>
        <end position="390"/>
    </location>
</feature>
<feature type="region of interest" description="4H">
    <location>
        <begin position="7"/>
        <end position="145"/>
    </location>
</feature>
<feature type="region of interest" description="EF-hand-like">
    <location>
        <begin position="146"/>
        <end position="218"/>
    </location>
</feature>
<feature type="region of interest" description="SH2-like">
    <location>
        <begin position="219"/>
        <end position="321"/>
    </location>
</feature>
<feature type="region of interest" description="Linker" evidence="1">
    <location>
        <begin position="322"/>
        <end position="350"/>
    </location>
</feature>
<feature type="region of interest" description="Interaction with RET" evidence="1">
    <location>
        <begin position="351"/>
        <end position="497"/>
    </location>
</feature>
<feature type="binding site" evidence="2">
    <location>
        <position position="199"/>
    </location>
    <ligand>
        <name>Ca(2+)</name>
        <dbReference type="ChEBI" id="CHEBI:29108"/>
    </ligand>
</feature>
<feature type="binding site" evidence="2">
    <location>
        <position position="201"/>
    </location>
    <ligand>
        <name>Ca(2+)</name>
        <dbReference type="ChEBI" id="CHEBI:29108"/>
    </ligand>
</feature>
<feature type="binding site" evidence="2">
    <location>
        <position position="210"/>
    </location>
    <ligand>
        <name>Ca(2+)</name>
        <dbReference type="ChEBI" id="CHEBI:29108"/>
    </ligand>
</feature>
<feature type="binding site" evidence="1">
    <location>
        <position position="264"/>
    </location>
    <ligand>
        <name>4-O-phospho-L-tyrosine</name>
        <dbReference type="ChEBI" id="CHEBI:62338"/>
    </ligand>
</feature>
<feature type="modified residue" description="Phosphotyrosine; by SRC" evidence="3">
    <location>
        <position position="341"/>
    </location>
</feature>
<feature type="sequence conflict" description="In Ref. 3; AAI05777." evidence="7" ref="3">
    <original>V</original>
    <variation>E</variation>
    <location>
        <position position="326"/>
    </location>
</feature>
<feature type="sequence conflict" description="In Ref. 3; AAI05777." evidence="7" ref="3">
    <original>N</original>
    <variation>D</variation>
    <location>
        <position position="453"/>
    </location>
</feature>
<proteinExistence type="evidence at protein level"/>
<name>CBLC_RAT</name>
<sequence length="497" mass="55775">MAAATAPQGWQWGEPRALGRAVKLLQRLEEQCRDLRLFVGPPSLRDLLPRTAQLLREVAKARSDKTRGDPEGPGGAGDFLVIYLTNLEAKGRQVAELLPHRGKKDANQDVFPEGSRFRRQLAKLALIFSHMHAELSALFPEGKYCGHLYQITKGSANTFWRENCGVRCVLPWAEFQSLLCSCHPVEPGPIMQALRSTLDLTCSGHVSVFEFDIFTRLFQPWPTLLKNWQLLAVNHPGYMAFLTYDEVQTRLQAYRDKPGSYIFRPSCTRLGQWAIGYVSSNGSILQTIPLNKPLLQVLLKGQKDGIFLYPDGKNHNPDLTELCRAVLNQCIQVSQEQLQLYQAMNSTFELCKICTERDKDVRIEPCGHLLCSCCLAAWQHSDSQTCPFCRCEIKGREAVSICQAQERSMEVRTTAGDSGDNCHQEAAEWKLESVTPSAPPLPPEVPCPQRPQNKGWLTLAPFTLPRLRPPLPLPKMASVLWEVTSRPQVREGATESS</sequence>
<keyword id="KW-0106">Calcium</keyword>
<keyword id="KW-0479">Metal-binding</keyword>
<keyword id="KW-0597">Phosphoprotein</keyword>
<keyword id="KW-1185">Reference proteome</keyword>
<keyword id="KW-0729">SH3-binding</keyword>
<keyword id="KW-0808">Transferase</keyword>
<keyword id="KW-0832">Ubl conjugation</keyword>
<keyword id="KW-0833">Ubl conjugation pathway</keyword>
<keyword id="KW-0862">Zinc</keyword>
<keyword id="KW-0863">Zinc-finger</keyword>
<organism>
    <name type="scientific">Rattus norvegicus</name>
    <name type="common">Rat</name>
    <dbReference type="NCBI Taxonomy" id="10116"/>
    <lineage>
        <taxon>Eukaryota</taxon>
        <taxon>Metazoa</taxon>
        <taxon>Chordata</taxon>
        <taxon>Craniata</taxon>
        <taxon>Vertebrata</taxon>
        <taxon>Euteleostomi</taxon>
        <taxon>Mammalia</taxon>
        <taxon>Eutheria</taxon>
        <taxon>Euarchontoglires</taxon>
        <taxon>Glires</taxon>
        <taxon>Rodentia</taxon>
        <taxon>Myomorpha</taxon>
        <taxon>Muroidea</taxon>
        <taxon>Muridae</taxon>
        <taxon>Murinae</taxon>
        <taxon>Rattus</taxon>
    </lineage>
</organism>
<protein>
    <recommendedName>
        <fullName>E3 ubiquitin-protein ligase CBL-C</fullName>
        <ecNumber evidence="3">2.3.2.27</ecNumber>
    </recommendedName>
    <alternativeName>
        <fullName evidence="7">RING-type E3 ubiquitin transferase CBL-C</fullName>
    </alternativeName>
</protein>
<reference key="1">
    <citation type="journal article" date="2004" name="Nature">
        <title>Genome sequence of the Brown Norway rat yields insights into mammalian evolution.</title>
        <authorList>
            <person name="Gibbs R.A."/>
            <person name="Weinstock G.M."/>
            <person name="Metzker M.L."/>
            <person name="Muzny D.M."/>
            <person name="Sodergren E.J."/>
            <person name="Scherer S."/>
            <person name="Scott G."/>
            <person name="Steffen D."/>
            <person name="Worley K.C."/>
            <person name="Burch P.E."/>
            <person name="Okwuonu G."/>
            <person name="Hines S."/>
            <person name="Lewis L."/>
            <person name="Deramo C."/>
            <person name="Delgado O."/>
            <person name="Dugan-Rocha S."/>
            <person name="Miner G."/>
            <person name="Morgan M."/>
            <person name="Hawes A."/>
            <person name="Gill R."/>
            <person name="Holt R.A."/>
            <person name="Adams M.D."/>
            <person name="Amanatides P.G."/>
            <person name="Baden-Tillson H."/>
            <person name="Barnstead M."/>
            <person name="Chin S."/>
            <person name="Evans C.A."/>
            <person name="Ferriera S."/>
            <person name="Fosler C."/>
            <person name="Glodek A."/>
            <person name="Gu Z."/>
            <person name="Jennings D."/>
            <person name="Kraft C.L."/>
            <person name="Nguyen T."/>
            <person name="Pfannkoch C.M."/>
            <person name="Sitter C."/>
            <person name="Sutton G.G."/>
            <person name="Venter J.C."/>
            <person name="Woodage T."/>
            <person name="Smith D."/>
            <person name="Lee H.-M."/>
            <person name="Gustafson E."/>
            <person name="Cahill P."/>
            <person name="Kana A."/>
            <person name="Doucette-Stamm L."/>
            <person name="Weinstock K."/>
            <person name="Fechtel K."/>
            <person name="Weiss R.B."/>
            <person name="Dunn D.M."/>
            <person name="Green E.D."/>
            <person name="Blakesley R.W."/>
            <person name="Bouffard G.G."/>
            <person name="De Jong P.J."/>
            <person name="Osoegawa K."/>
            <person name="Zhu B."/>
            <person name="Marra M."/>
            <person name="Schein J."/>
            <person name="Bosdet I."/>
            <person name="Fjell C."/>
            <person name="Jones S."/>
            <person name="Krzywinski M."/>
            <person name="Mathewson C."/>
            <person name="Siddiqui A."/>
            <person name="Wye N."/>
            <person name="McPherson J."/>
            <person name="Zhao S."/>
            <person name="Fraser C.M."/>
            <person name="Shetty J."/>
            <person name="Shatsman S."/>
            <person name="Geer K."/>
            <person name="Chen Y."/>
            <person name="Abramzon S."/>
            <person name="Nierman W.C."/>
            <person name="Havlak P.H."/>
            <person name="Chen R."/>
            <person name="Durbin K.J."/>
            <person name="Egan A."/>
            <person name="Ren Y."/>
            <person name="Song X.-Z."/>
            <person name="Li B."/>
            <person name="Liu Y."/>
            <person name="Qin X."/>
            <person name="Cawley S."/>
            <person name="Cooney A.J."/>
            <person name="D'Souza L.M."/>
            <person name="Martin K."/>
            <person name="Wu J.Q."/>
            <person name="Gonzalez-Garay M.L."/>
            <person name="Jackson A.R."/>
            <person name="Kalafus K.J."/>
            <person name="McLeod M.P."/>
            <person name="Milosavljevic A."/>
            <person name="Virk D."/>
            <person name="Volkov A."/>
            <person name="Wheeler D.A."/>
            <person name="Zhang Z."/>
            <person name="Bailey J.A."/>
            <person name="Eichler E.E."/>
            <person name="Tuzun E."/>
            <person name="Birney E."/>
            <person name="Mongin E."/>
            <person name="Ureta-Vidal A."/>
            <person name="Woodwark C."/>
            <person name="Zdobnov E."/>
            <person name="Bork P."/>
            <person name="Suyama M."/>
            <person name="Torrents D."/>
            <person name="Alexandersson M."/>
            <person name="Trask B.J."/>
            <person name="Young J.M."/>
            <person name="Huang H."/>
            <person name="Wang H."/>
            <person name="Xing H."/>
            <person name="Daniels S."/>
            <person name="Gietzen D."/>
            <person name="Schmidt J."/>
            <person name="Stevens K."/>
            <person name="Vitt U."/>
            <person name="Wingrove J."/>
            <person name="Camara F."/>
            <person name="Mar Alba M."/>
            <person name="Abril J.F."/>
            <person name="Guigo R."/>
            <person name="Smit A."/>
            <person name="Dubchak I."/>
            <person name="Rubin E.M."/>
            <person name="Couronne O."/>
            <person name="Poliakov A."/>
            <person name="Huebner N."/>
            <person name="Ganten D."/>
            <person name="Goesele C."/>
            <person name="Hummel O."/>
            <person name="Kreitler T."/>
            <person name="Lee Y.-A."/>
            <person name="Monti J."/>
            <person name="Schulz H."/>
            <person name="Zimdahl H."/>
            <person name="Himmelbauer H."/>
            <person name="Lehrach H."/>
            <person name="Jacob H.J."/>
            <person name="Bromberg S."/>
            <person name="Gullings-Handley J."/>
            <person name="Jensen-Seaman M.I."/>
            <person name="Kwitek A.E."/>
            <person name="Lazar J."/>
            <person name="Pasko D."/>
            <person name="Tonellato P.J."/>
            <person name="Twigger S."/>
            <person name="Ponting C.P."/>
            <person name="Duarte J.M."/>
            <person name="Rice S."/>
            <person name="Goodstadt L."/>
            <person name="Beatson S.A."/>
            <person name="Emes R.D."/>
            <person name="Winter E.E."/>
            <person name="Webber C."/>
            <person name="Brandt P."/>
            <person name="Nyakatura G."/>
            <person name="Adetobi M."/>
            <person name="Chiaromonte F."/>
            <person name="Elnitski L."/>
            <person name="Eswara P."/>
            <person name="Hardison R.C."/>
            <person name="Hou M."/>
            <person name="Kolbe D."/>
            <person name="Makova K."/>
            <person name="Miller W."/>
            <person name="Nekrutenko A."/>
            <person name="Riemer C."/>
            <person name="Schwartz S."/>
            <person name="Taylor J."/>
            <person name="Yang S."/>
            <person name="Zhang Y."/>
            <person name="Lindpaintner K."/>
            <person name="Andrews T.D."/>
            <person name="Caccamo M."/>
            <person name="Clamp M."/>
            <person name="Clarke L."/>
            <person name="Curwen V."/>
            <person name="Durbin R.M."/>
            <person name="Eyras E."/>
            <person name="Searle S.M."/>
            <person name="Cooper G.M."/>
            <person name="Batzoglou S."/>
            <person name="Brudno M."/>
            <person name="Sidow A."/>
            <person name="Stone E.A."/>
            <person name="Payseur B.A."/>
            <person name="Bourque G."/>
            <person name="Lopez-Otin C."/>
            <person name="Puente X.S."/>
            <person name="Chakrabarti K."/>
            <person name="Chatterji S."/>
            <person name="Dewey C."/>
            <person name="Pachter L."/>
            <person name="Bray N."/>
            <person name="Yap V.B."/>
            <person name="Caspi A."/>
            <person name="Tesler G."/>
            <person name="Pevzner P.A."/>
            <person name="Haussler D."/>
            <person name="Roskin K.M."/>
            <person name="Baertsch R."/>
            <person name="Clawson H."/>
            <person name="Furey T.S."/>
            <person name="Hinrichs A.S."/>
            <person name="Karolchik D."/>
            <person name="Kent W.J."/>
            <person name="Rosenbloom K.R."/>
            <person name="Trumbower H."/>
            <person name="Weirauch M."/>
            <person name="Cooper D.N."/>
            <person name="Stenson P.D."/>
            <person name="Ma B."/>
            <person name="Brent M."/>
            <person name="Arumugam M."/>
            <person name="Shteynberg D."/>
            <person name="Copley R.R."/>
            <person name="Taylor M.S."/>
            <person name="Riethman H."/>
            <person name="Mudunuri U."/>
            <person name="Peterson J."/>
            <person name="Guyer M."/>
            <person name="Felsenfeld A."/>
            <person name="Old S."/>
            <person name="Mockrin S."/>
            <person name="Collins F.S."/>
        </authorList>
    </citation>
    <scope>NUCLEOTIDE SEQUENCE [LARGE SCALE GENOMIC DNA]</scope>
    <source>
        <strain>Brown Norway</strain>
    </source>
</reference>
<reference key="2">
    <citation type="submission" date="2005-09" db="EMBL/GenBank/DDBJ databases">
        <authorList>
            <person name="Mural R.J."/>
            <person name="Adams M.D."/>
            <person name="Myers E.W."/>
            <person name="Smith H.O."/>
            <person name="Venter J.C."/>
        </authorList>
    </citation>
    <scope>NUCLEOTIDE SEQUENCE [LARGE SCALE GENOMIC DNA]</scope>
</reference>
<reference key="3">
    <citation type="journal article" date="2004" name="Genome Res.">
        <title>The status, quality, and expansion of the NIH full-length cDNA project: the Mammalian Gene Collection (MGC).</title>
        <authorList>
            <consortium name="The MGC Project Team"/>
        </authorList>
    </citation>
    <scope>NUCLEOTIDE SEQUENCE [LARGE SCALE MRNA]</scope>
</reference>
<reference key="4">
    <citation type="journal article" date="2008" name="J. Neurosci.">
        <title>CD2AP and Cbl-3/Cbl-c constitute a critical checkpoint in the regulation of ret signal transduction.</title>
        <authorList>
            <person name="Tsui C.C."/>
            <person name="Pierchala B.A."/>
        </authorList>
    </citation>
    <scope>FUNCTION IN RET STABILITY</scope>
    <scope>INTERACTION WITH CD2AP AND RET</scope>
</reference>